<gene>
    <name type="primary">JAL8</name>
    <name type="ordered locus">At1g52050</name>
    <name type="ORF">F5F19.11</name>
</gene>
<reference key="1">
    <citation type="journal article" date="2000" name="Nature">
        <title>Sequence and analysis of chromosome 1 of the plant Arabidopsis thaliana.</title>
        <authorList>
            <person name="Theologis A."/>
            <person name="Ecker J.R."/>
            <person name="Palm C.J."/>
            <person name="Federspiel N.A."/>
            <person name="Kaul S."/>
            <person name="White O."/>
            <person name="Alonso J."/>
            <person name="Altafi H."/>
            <person name="Araujo R."/>
            <person name="Bowman C.L."/>
            <person name="Brooks S.Y."/>
            <person name="Buehler E."/>
            <person name="Chan A."/>
            <person name="Chao Q."/>
            <person name="Chen H."/>
            <person name="Cheuk R.F."/>
            <person name="Chin C.W."/>
            <person name="Chung M.K."/>
            <person name="Conn L."/>
            <person name="Conway A.B."/>
            <person name="Conway A.R."/>
            <person name="Creasy T.H."/>
            <person name="Dewar K."/>
            <person name="Dunn P."/>
            <person name="Etgu P."/>
            <person name="Feldblyum T.V."/>
            <person name="Feng J.-D."/>
            <person name="Fong B."/>
            <person name="Fujii C.Y."/>
            <person name="Gill J.E."/>
            <person name="Goldsmith A.D."/>
            <person name="Haas B."/>
            <person name="Hansen N.F."/>
            <person name="Hughes B."/>
            <person name="Huizar L."/>
            <person name="Hunter J.L."/>
            <person name="Jenkins J."/>
            <person name="Johnson-Hopson C."/>
            <person name="Khan S."/>
            <person name="Khaykin E."/>
            <person name="Kim C.J."/>
            <person name="Koo H.L."/>
            <person name="Kremenetskaia I."/>
            <person name="Kurtz D.B."/>
            <person name="Kwan A."/>
            <person name="Lam B."/>
            <person name="Langin-Hooper S."/>
            <person name="Lee A."/>
            <person name="Lee J.M."/>
            <person name="Lenz C.A."/>
            <person name="Li J.H."/>
            <person name="Li Y.-P."/>
            <person name="Lin X."/>
            <person name="Liu S.X."/>
            <person name="Liu Z.A."/>
            <person name="Luros J.S."/>
            <person name="Maiti R."/>
            <person name="Marziali A."/>
            <person name="Militscher J."/>
            <person name="Miranda M."/>
            <person name="Nguyen M."/>
            <person name="Nierman W.C."/>
            <person name="Osborne B.I."/>
            <person name="Pai G."/>
            <person name="Peterson J."/>
            <person name="Pham P.K."/>
            <person name="Rizzo M."/>
            <person name="Rooney T."/>
            <person name="Rowley D."/>
            <person name="Sakano H."/>
            <person name="Salzberg S.L."/>
            <person name="Schwartz J.R."/>
            <person name="Shinn P."/>
            <person name="Southwick A.M."/>
            <person name="Sun H."/>
            <person name="Tallon L.J."/>
            <person name="Tambunga G."/>
            <person name="Toriumi M.J."/>
            <person name="Town C.D."/>
            <person name="Utterback T."/>
            <person name="Van Aken S."/>
            <person name="Vaysberg M."/>
            <person name="Vysotskaia V.S."/>
            <person name="Walker M."/>
            <person name="Wu D."/>
            <person name="Yu G."/>
            <person name="Fraser C.M."/>
            <person name="Venter J.C."/>
            <person name="Davis R.W."/>
        </authorList>
    </citation>
    <scope>NUCLEOTIDE SEQUENCE [LARGE SCALE GENOMIC DNA]</scope>
    <source>
        <strain>cv. Columbia</strain>
    </source>
</reference>
<reference key="2">
    <citation type="journal article" date="2017" name="Plant J.">
        <title>Araport11: a complete reannotation of the Arabidopsis thaliana reference genome.</title>
        <authorList>
            <person name="Cheng C.Y."/>
            <person name="Krishnakumar V."/>
            <person name="Chan A.P."/>
            <person name="Thibaud-Nissen F."/>
            <person name="Schobel S."/>
            <person name="Town C.D."/>
        </authorList>
    </citation>
    <scope>GENOME REANNOTATION</scope>
    <source>
        <strain>cv. Columbia</strain>
    </source>
</reference>
<reference key="3">
    <citation type="journal article" date="2008" name="Plant Cell Physiol.">
        <title>Antagonistic jacalin-related lectins regulate the size of ER body-type beta-glucosidase complexes in Arabidopsis thaliana.</title>
        <authorList>
            <person name="Nagano A.J."/>
            <person name="Fukao Y."/>
            <person name="Fujiwara M."/>
            <person name="Nishimura M."/>
            <person name="Hara-Nishimura I."/>
        </authorList>
    </citation>
    <scope>GENE FAMILY</scope>
    <scope>NOMENCLATURE</scope>
</reference>
<protein>
    <recommendedName>
        <fullName>Jacalin-related lectin 8</fullName>
    </recommendedName>
</protein>
<evidence type="ECO:0000255" key="1"/>
<evidence type="ECO:0000255" key="2">
    <source>
        <dbReference type="PROSITE-ProRule" id="PRU01088"/>
    </source>
</evidence>
<evidence type="ECO:0000305" key="3"/>
<sequence length="313" mass="34646">MFIIYLFIFLSSAIIDSNGVAMAQKIEAIGGKGGKRWDDGANDNVAKVYIRGDHEGIQYIKFDYVKDGQSFNGSVHGVSADGFTQTFEIDHLQYEQIVSVEGYYDWKTGVMQALQFKTNLKTSEFIGYQKGTKFSLGVDGKVIVGFHGSAWRSLRSLGAYVKTAPTKSELQGGITGGEYWDDGPNFDGVRKVYVTFTETHIRSMNIDYDQDGQVVTRYHGMKNGETQEFAVDFPNEYMTSVEGTYDHISEGNYLVLTSLTFKTSKGRISQTFGLVIGTKFVLETKGNVISGFHGRDGGSFDAIGVYFSPMISS</sequence>
<keyword id="KW-0430">Lectin</keyword>
<keyword id="KW-1185">Reference proteome</keyword>
<keyword id="KW-0677">Repeat</keyword>
<keyword id="KW-0732">Signal</keyword>
<dbReference type="EMBL" id="AC006216">
    <property type="protein sequence ID" value="AAD12679.1"/>
    <property type="status" value="ALT_SEQ"/>
    <property type="molecule type" value="Genomic_DNA"/>
</dbReference>
<dbReference type="EMBL" id="CP002684">
    <property type="protein sequence ID" value="AEE32750.1"/>
    <property type="molecule type" value="Genomic_DNA"/>
</dbReference>
<dbReference type="PIR" id="C96560">
    <property type="entry name" value="C96560"/>
</dbReference>
<dbReference type="RefSeq" id="NP_175617.2">
    <property type="nucleotide sequence ID" value="NM_104086.3"/>
</dbReference>
<dbReference type="SMR" id="F4IB94"/>
<dbReference type="FunCoup" id="F4IB94">
    <property type="interactions" value="18"/>
</dbReference>
<dbReference type="STRING" id="3702.F4IB94"/>
<dbReference type="iPTMnet" id="F4IB94"/>
<dbReference type="PaxDb" id="3702-AT1G52050.1"/>
<dbReference type="ProteomicsDB" id="232265"/>
<dbReference type="EnsemblPlants" id="AT1G52050.1">
    <property type="protein sequence ID" value="AT1G52050.1"/>
    <property type="gene ID" value="AT1G52050"/>
</dbReference>
<dbReference type="GeneID" id="841634"/>
<dbReference type="Gramene" id="AT1G52050.1">
    <property type="protein sequence ID" value="AT1G52050.1"/>
    <property type="gene ID" value="AT1G52050"/>
</dbReference>
<dbReference type="KEGG" id="ath:AT1G52050"/>
<dbReference type="Araport" id="AT1G52050"/>
<dbReference type="TAIR" id="AT1G52050"/>
<dbReference type="HOGENOM" id="CLU_019384_1_0_1"/>
<dbReference type="InParanoid" id="F4IB94"/>
<dbReference type="OMA" id="FEYARGQ"/>
<dbReference type="PRO" id="PR:F4IB94"/>
<dbReference type="Proteomes" id="UP000006548">
    <property type="component" value="Chromosome 1"/>
</dbReference>
<dbReference type="ExpressionAtlas" id="F4IB94">
    <property type="expression patterns" value="baseline and differential"/>
</dbReference>
<dbReference type="GO" id="GO:0030246">
    <property type="term" value="F:carbohydrate binding"/>
    <property type="evidence" value="ECO:0007669"/>
    <property type="project" value="UniProtKB-KW"/>
</dbReference>
<dbReference type="CDD" id="cd09612">
    <property type="entry name" value="Jacalin"/>
    <property type="match status" value="2"/>
</dbReference>
<dbReference type="FunFam" id="2.100.10.30:FF:000001">
    <property type="entry name" value="Jacalin-related lectin 33"/>
    <property type="match status" value="2"/>
</dbReference>
<dbReference type="Gene3D" id="2.100.10.30">
    <property type="entry name" value="Jacalin-like lectin domain"/>
    <property type="match status" value="2"/>
</dbReference>
<dbReference type="InterPro" id="IPR001229">
    <property type="entry name" value="Jacalin-like_lectin_dom"/>
</dbReference>
<dbReference type="InterPro" id="IPR033734">
    <property type="entry name" value="Jacalin-like_lectin_dom_plant"/>
</dbReference>
<dbReference type="InterPro" id="IPR036404">
    <property type="entry name" value="Jacalin-like_lectin_dom_sf"/>
</dbReference>
<dbReference type="PANTHER" id="PTHR47293:SF52">
    <property type="entry name" value="JACALIN-RELATED LECTIN 10-RELATED"/>
    <property type="match status" value="1"/>
</dbReference>
<dbReference type="PANTHER" id="PTHR47293">
    <property type="entry name" value="JACALIN-RELATED LECTIN 3"/>
    <property type="match status" value="1"/>
</dbReference>
<dbReference type="Pfam" id="PF01419">
    <property type="entry name" value="Jacalin"/>
    <property type="match status" value="2"/>
</dbReference>
<dbReference type="SMART" id="SM00915">
    <property type="entry name" value="Jacalin"/>
    <property type="match status" value="2"/>
</dbReference>
<dbReference type="SUPFAM" id="SSF51101">
    <property type="entry name" value="Mannose-binding lectins"/>
    <property type="match status" value="2"/>
</dbReference>
<dbReference type="PROSITE" id="PS51752">
    <property type="entry name" value="JACALIN_LECTIN"/>
    <property type="match status" value="2"/>
</dbReference>
<organism>
    <name type="scientific">Arabidopsis thaliana</name>
    <name type="common">Mouse-ear cress</name>
    <dbReference type="NCBI Taxonomy" id="3702"/>
    <lineage>
        <taxon>Eukaryota</taxon>
        <taxon>Viridiplantae</taxon>
        <taxon>Streptophyta</taxon>
        <taxon>Embryophyta</taxon>
        <taxon>Tracheophyta</taxon>
        <taxon>Spermatophyta</taxon>
        <taxon>Magnoliopsida</taxon>
        <taxon>eudicotyledons</taxon>
        <taxon>Gunneridae</taxon>
        <taxon>Pentapetalae</taxon>
        <taxon>rosids</taxon>
        <taxon>malvids</taxon>
        <taxon>Brassicales</taxon>
        <taxon>Brassicaceae</taxon>
        <taxon>Camelineae</taxon>
        <taxon>Arabidopsis</taxon>
    </lineage>
</organism>
<feature type="signal peptide" evidence="1">
    <location>
        <begin position="1"/>
        <end position="23"/>
    </location>
</feature>
<feature type="chain" id="PRO_0000430375" description="Jacalin-related lectin 8">
    <location>
        <begin position="24"/>
        <end position="313"/>
    </location>
</feature>
<feature type="domain" description="Jacalin-type lectin 1" evidence="2">
    <location>
        <begin position="24"/>
        <end position="163"/>
    </location>
</feature>
<feature type="domain" description="Jacalin-type lectin 2" evidence="2">
    <location>
        <begin position="165"/>
        <end position="309"/>
    </location>
</feature>
<name>JAL8_ARATH</name>
<proteinExistence type="inferred from homology"/>
<comment type="similarity">
    <text evidence="2 3">Belongs to the jacalin lectin family.</text>
</comment>
<comment type="sequence caution" evidence="3">
    <conflict type="erroneous gene model prediction">
        <sequence resource="EMBL-CDS" id="AAD12679"/>
    </conflict>
</comment>
<accession>F4IB94</accession>
<accession>Q9ZU20</accession>